<organism>
    <name type="scientific">Pongo abelii</name>
    <name type="common">Sumatran orangutan</name>
    <name type="synonym">Pongo pygmaeus abelii</name>
    <dbReference type="NCBI Taxonomy" id="9601"/>
    <lineage>
        <taxon>Eukaryota</taxon>
        <taxon>Metazoa</taxon>
        <taxon>Chordata</taxon>
        <taxon>Craniata</taxon>
        <taxon>Vertebrata</taxon>
        <taxon>Euteleostomi</taxon>
        <taxon>Mammalia</taxon>
        <taxon>Eutheria</taxon>
        <taxon>Euarchontoglires</taxon>
        <taxon>Primates</taxon>
        <taxon>Haplorrhini</taxon>
        <taxon>Catarrhini</taxon>
        <taxon>Hominidae</taxon>
        <taxon>Pongo</taxon>
    </lineage>
</organism>
<protein>
    <recommendedName>
        <fullName>Histone H2A.Z</fullName>
        <shortName>H2A/z</shortName>
    </recommendedName>
</protein>
<proteinExistence type="evidence at transcript level"/>
<reference key="1">
    <citation type="submission" date="2004-11" db="EMBL/GenBank/DDBJ databases">
        <authorList>
            <consortium name="The German cDNA consortium"/>
        </authorList>
    </citation>
    <scope>NUCLEOTIDE SEQUENCE [LARGE SCALE MRNA]</scope>
    <source>
        <tissue>Heart</tissue>
    </source>
</reference>
<name>H2AZ_PONAB</name>
<gene>
    <name type="primary">H2AZ1</name>
</gene>
<comment type="function">
    <text evidence="3 4">Variant histone H2A which replaces conventional H2A in a subset of nucleosomes. Nucleosomes wrap and compact DNA into chromatin, limiting DNA accessibility to the cellular machineries which require DNA as a template. Histones thereby play a central role in transcription regulation, DNA repair, DNA replication and chromosomal stability. DNA accessibility is regulated via a complex set of post-translational modifications of histones, also called histone code, and nucleosome remodeling. May be involved in the formation of constitutive heterochromatin. May be required for chromosome segregation during cell division (By similarity).</text>
</comment>
<comment type="subunit">
    <text evidence="3 4">The nucleosome is a histone octamer containing two molecules each of H2A, H2B, H3 and H4 assembled in one H3-H4 heterotetramer and two H2A-H2B heterodimers. The octamer wraps approximately 147 bp of DNA. H2A or its variant H2AZ1 forms a heterodimer with H2B. H2AZ1 interacts with INCENP. Interacts (via M6 cassette) with ANP32E; leading to removal of H2A.Z/H2AZ1 from the nucleosome. Interacts with VPS72 (via N-terminal domain); the interaction is enhanced by VPS72 phosphorylation which is promoted by ZNHIT1. Interacts with PWWP2A. Interacts with FH (when phosphorylated by PRKDC). Interacts with ZNHIT1; the interaction results in recruitment of H2AZ1 to the MYOG promoter region which is required for muscle-specific gene expression (By similarity).</text>
</comment>
<comment type="subcellular location">
    <subcellularLocation>
        <location>Nucleus</location>
    </subcellularLocation>
    <subcellularLocation>
        <location>Chromosome</location>
    </subcellularLocation>
</comment>
<comment type="PTM">
    <text evidence="3">Monoubiquitination of Lys-122 gives a specific tag for epigenetic transcriptional repression.</text>
</comment>
<comment type="PTM">
    <text evidence="3 4">Acetylated on Lys-5, Lys-8, Lys-12 and Lys-14 by KAT2A; KAT2A is recruited by the XPC complex in absence of DNA damage (By similarity). Acetylated on Lys-5, Lys-8 and Lys-12 during interphase; acetylation disappears at mitosis (By similarity). Acetylation by the NuA4 histone acetyltransferase complex is required for hematopoietic stem cell maintenance (By similarity).</text>
</comment>
<comment type="PTM">
    <text evidence="2">Not phosphorylated.</text>
</comment>
<comment type="PTM">
    <text evidence="3">Monomethylated on Lys-5 and Lys-8 by SETD6. SETD6 predominantly methylates Lys-8, lys-5 being a possible secondary site.</text>
</comment>
<comment type="PTM">
    <text evidence="3">Lactylated in macrophages by EP300/P300 by using lactoyl-CoA directly derived from endogenous or exogenous lactate, leading to stimulates gene transcription.</text>
</comment>
<comment type="similarity">
    <text evidence="6">Belongs to the histone H2A family.</text>
</comment>
<dbReference type="EMBL" id="CR858439">
    <property type="protein sequence ID" value="CAH90668.1"/>
    <property type="molecule type" value="mRNA"/>
</dbReference>
<dbReference type="RefSeq" id="NP_001127318.1">
    <property type="nucleotide sequence ID" value="NM_001133846.2"/>
</dbReference>
<dbReference type="SMR" id="Q5RC42"/>
<dbReference type="FunCoup" id="Q5RC42">
    <property type="interactions" value="2308"/>
</dbReference>
<dbReference type="STRING" id="9601.ENSPPYP00000016702"/>
<dbReference type="Ensembl" id="ENSPPYT00000017381.3">
    <property type="protein sequence ID" value="ENSPPYP00000016702.2"/>
    <property type="gene ID" value="ENSPPYG00000014957.3"/>
</dbReference>
<dbReference type="GeneID" id="100174379"/>
<dbReference type="KEGG" id="pon:100174379"/>
<dbReference type="CTD" id="3015"/>
<dbReference type="eggNOG" id="KOG1757">
    <property type="taxonomic scope" value="Eukaryota"/>
</dbReference>
<dbReference type="GeneTree" id="ENSGT00900000140979"/>
<dbReference type="HOGENOM" id="CLU_062828_2_2_1"/>
<dbReference type="InParanoid" id="Q5RC42"/>
<dbReference type="OrthoDB" id="9529939at2759"/>
<dbReference type="TreeFam" id="TF354232"/>
<dbReference type="Proteomes" id="UP000001595">
    <property type="component" value="Chromosome 4"/>
</dbReference>
<dbReference type="GO" id="GO:0000786">
    <property type="term" value="C:nucleosome"/>
    <property type="evidence" value="ECO:0007669"/>
    <property type="project" value="UniProtKB-KW"/>
</dbReference>
<dbReference type="GO" id="GO:0005634">
    <property type="term" value="C:nucleus"/>
    <property type="evidence" value="ECO:0007669"/>
    <property type="project" value="UniProtKB-SubCell"/>
</dbReference>
<dbReference type="GO" id="GO:0003677">
    <property type="term" value="F:DNA binding"/>
    <property type="evidence" value="ECO:0007669"/>
    <property type="project" value="UniProtKB-KW"/>
</dbReference>
<dbReference type="GO" id="GO:0046982">
    <property type="term" value="F:protein heterodimerization activity"/>
    <property type="evidence" value="ECO:0007669"/>
    <property type="project" value="InterPro"/>
</dbReference>
<dbReference type="GO" id="GO:0030527">
    <property type="term" value="F:structural constituent of chromatin"/>
    <property type="evidence" value="ECO:0007669"/>
    <property type="project" value="InterPro"/>
</dbReference>
<dbReference type="CDD" id="cd00074">
    <property type="entry name" value="HFD_H2A"/>
    <property type="match status" value="1"/>
</dbReference>
<dbReference type="FunFam" id="1.10.20.10:FF:000005">
    <property type="entry name" value="Histone H2A"/>
    <property type="match status" value="1"/>
</dbReference>
<dbReference type="Gene3D" id="1.10.20.10">
    <property type="entry name" value="Histone, subunit A"/>
    <property type="match status" value="1"/>
</dbReference>
<dbReference type="InterPro" id="IPR009072">
    <property type="entry name" value="Histone-fold"/>
</dbReference>
<dbReference type="InterPro" id="IPR002119">
    <property type="entry name" value="Histone_H2A"/>
</dbReference>
<dbReference type="InterPro" id="IPR007125">
    <property type="entry name" value="Histone_H2A/H2B/H3"/>
</dbReference>
<dbReference type="InterPro" id="IPR032454">
    <property type="entry name" value="Histone_H2A_C"/>
</dbReference>
<dbReference type="InterPro" id="IPR032458">
    <property type="entry name" value="Histone_H2A_CS"/>
</dbReference>
<dbReference type="PANTHER" id="PTHR23430">
    <property type="entry name" value="HISTONE H2A"/>
    <property type="match status" value="1"/>
</dbReference>
<dbReference type="Pfam" id="PF00125">
    <property type="entry name" value="Histone"/>
    <property type="match status" value="1"/>
</dbReference>
<dbReference type="Pfam" id="PF16211">
    <property type="entry name" value="Histone_H2A_C"/>
    <property type="match status" value="1"/>
</dbReference>
<dbReference type="PRINTS" id="PR00620">
    <property type="entry name" value="HISTONEH2A"/>
</dbReference>
<dbReference type="SMART" id="SM00414">
    <property type="entry name" value="H2A"/>
    <property type="match status" value="1"/>
</dbReference>
<dbReference type="SUPFAM" id="SSF47113">
    <property type="entry name" value="Histone-fold"/>
    <property type="match status" value="1"/>
</dbReference>
<dbReference type="PROSITE" id="PS00046">
    <property type="entry name" value="HISTONE_H2A"/>
    <property type="match status" value="1"/>
</dbReference>
<evidence type="ECO:0000250" key="1"/>
<evidence type="ECO:0000250" key="2">
    <source>
        <dbReference type="UniProtKB" id="P0C0S4"/>
    </source>
</evidence>
<evidence type="ECO:0000250" key="3">
    <source>
        <dbReference type="UniProtKB" id="P0C0S5"/>
    </source>
</evidence>
<evidence type="ECO:0000250" key="4">
    <source>
        <dbReference type="UniProtKB" id="P0C0S6"/>
    </source>
</evidence>
<evidence type="ECO:0000256" key="5">
    <source>
        <dbReference type="SAM" id="MobiDB-lite"/>
    </source>
</evidence>
<evidence type="ECO:0000305" key="6"/>
<sequence>MAGGKAGKDSGKAKTKAVSRSQRAGLQFPVGRIHRHLKSRTTSHGRVGATAAVYSAAILEYLTAEVLELAGNASKDLKVKRITPRHLQLAIRGDEELDSLIKATIAGGGVIPHIHKSLIGKKGQQKTV</sequence>
<feature type="initiator methionine" description="Removed" evidence="6">
    <location>
        <position position="1"/>
    </location>
</feature>
<feature type="chain" id="PRO_0000055299" description="Histone H2A.Z">
    <location>
        <begin position="2"/>
        <end position="128"/>
    </location>
</feature>
<feature type="region of interest" description="Disordered" evidence="5">
    <location>
        <begin position="1"/>
        <end position="25"/>
    </location>
</feature>
<feature type="region of interest" description="Required for interaction with INCENP" evidence="1">
    <location>
        <begin position="1"/>
        <end position="17"/>
    </location>
</feature>
<feature type="region of interest" description="M6 cassette" evidence="1">
    <location>
        <begin position="89"/>
        <end position="100"/>
    </location>
</feature>
<feature type="region of interest" description="Required for interaction with INCENP" evidence="1">
    <location>
        <begin position="93"/>
        <end position="103"/>
    </location>
</feature>
<feature type="region of interest" description="Required for interaction with PWWP2A" evidence="3">
    <location>
        <begin position="120"/>
        <end position="128"/>
    </location>
</feature>
<feature type="compositionally biased region" description="Basic and acidic residues" evidence="5">
    <location>
        <begin position="1"/>
        <end position="12"/>
    </location>
</feature>
<feature type="modified residue" description="N6-acetyllysine; alternate" evidence="3">
    <location>
        <position position="5"/>
    </location>
</feature>
<feature type="modified residue" description="N6-methyllysine; alternate" evidence="3">
    <location>
        <position position="5"/>
    </location>
</feature>
<feature type="modified residue" description="N6-acetyllysine; alternate" evidence="3">
    <location>
        <position position="8"/>
    </location>
</feature>
<feature type="modified residue" description="N6-methyllysine; alternate" evidence="3">
    <location>
        <position position="8"/>
    </location>
</feature>
<feature type="modified residue" description="N6-acetyllysine; alternate" evidence="3">
    <location>
        <position position="12"/>
    </location>
</feature>
<feature type="modified residue" description="N6-lactoyllysine; alternate" evidence="3">
    <location>
        <position position="12"/>
    </location>
</feature>
<feature type="modified residue" description="N6-acetyllysine; alternate" evidence="3">
    <location>
        <position position="14"/>
    </location>
</feature>
<feature type="modified residue" description="N6-lactoyllysine; alternate" evidence="3">
    <location>
        <position position="14"/>
    </location>
</feature>
<feature type="modified residue" description="N6-lactoyllysine" evidence="3">
    <location>
        <position position="116"/>
    </location>
</feature>
<feature type="cross-link" description="Glycyl lysine isopeptide (Lys-Gly) (interchain with G-Cter in ubiquitin)" evidence="3">
    <location>
        <position position="122"/>
    </location>
</feature>
<keyword id="KW-0007">Acetylation</keyword>
<keyword id="KW-0158">Chromosome</keyword>
<keyword id="KW-0238">DNA-binding</keyword>
<keyword id="KW-1017">Isopeptide bond</keyword>
<keyword id="KW-0488">Methylation</keyword>
<keyword id="KW-0544">Nucleosome core</keyword>
<keyword id="KW-0539">Nucleus</keyword>
<keyword id="KW-1185">Reference proteome</keyword>
<keyword id="KW-0832">Ubl conjugation</keyword>
<accession>Q5RC42</accession>